<reference key="1">
    <citation type="journal article" date="1997" name="DNA Res.">
        <title>Structural analysis of Arabidopsis thaliana chromosome 5. II. Sequence features of the regions of 1,044,062 bp covered by thirteen physically assigned P1 clones.</title>
        <authorList>
            <person name="Kotani H."/>
            <person name="Nakamura Y."/>
            <person name="Sato S."/>
            <person name="Kaneko T."/>
            <person name="Asamizu E."/>
            <person name="Miyajima N."/>
            <person name="Tabata S."/>
        </authorList>
    </citation>
    <scope>NUCLEOTIDE SEQUENCE [LARGE SCALE GENOMIC DNA]</scope>
    <source>
        <strain>cv. Columbia</strain>
    </source>
</reference>
<reference key="2">
    <citation type="journal article" date="2017" name="Plant J.">
        <title>Araport11: a complete reannotation of the Arabidopsis thaliana reference genome.</title>
        <authorList>
            <person name="Cheng C.Y."/>
            <person name="Krishnakumar V."/>
            <person name="Chan A.P."/>
            <person name="Thibaud-Nissen F."/>
            <person name="Schobel S."/>
            <person name="Town C.D."/>
        </authorList>
    </citation>
    <scope>GENOME REANNOTATION</scope>
    <source>
        <strain>cv. Columbia</strain>
    </source>
</reference>
<reference key="3">
    <citation type="submission" date="2004-03" db="EMBL/GenBank/DDBJ databases">
        <title>Arabidopsis ORF clones.</title>
        <authorList>
            <person name="Shinn P."/>
            <person name="Chen H."/>
            <person name="Cheuk R.F."/>
            <person name="Kim C.J."/>
            <person name="Ecker J.R."/>
        </authorList>
    </citation>
    <scope>NUCLEOTIDE SEQUENCE [LARGE SCALE MRNA]</scope>
    <source>
        <strain>cv. Columbia</strain>
    </source>
</reference>
<reference key="4">
    <citation type="journal article" date="2014" name="Plant Physiol.">
        <title>Functional and evolutionary analysis of the CASPARIAN STRIP MEMBRANE DOMAIN PROTEIN family.</title>
        <authorList>
            <person name="Roppolo D."/>
            <person name="Boeckmann B."/>
            <person name="Pfister A."/>
            <person name="Boutet E."/>
            <person name="Rubio M.C."/>
            <person name="Denervaud-Tendon V."/>
            <person name="Vermeer J.E."/>
            <person name="Gheyselinck J."/>
            <person name="Xenarios I."/>
            <person name="Geldner N."/>
        </authorList>
    </citation>
    <scope>GENE FAMILY</scope>
    <scope>NOMENCLATURE</scope>
</reference>
<gene>
    <name type="ordered locus">At5g40300</name>
    <name type="ORF">MPO12.1</name>
</gene>
<evidence type="ECO:0000250" key="1"/>
<evidence type="ECO:0000255" key="2"/>
<evidence type="ECO:0000256" key="3">
    <source>
        <dbReference type="SAM" id="MobiDB-lite"/>
    </source>
</evidence>
<evidence type="ECO:0000305" key="4"/>
<comment type="subunit">
    <text evidence="1">Homodimer and heterodimers.</text>
</comment>
<comment type="subcellular location">
    <subcellularLocation>
        <location evidence="1">Cell membrane</location>
        <topology evidence="1">Multi-pass membrane protein</topology>
    </subcellularLocation>
</comment>
<comment type="similarity">
    <text evidence="4">Belongs to the Casparian strip membrane proteins (CASP) family.</text>
</comment>
<proteinExistence type="evidence at transcript level"/>
<accession>Q9FNE8</accession>
<dbReference type="EMBL" id="AB006702">
    <property type="protein sequence ID" value="BAB11584.1"/>
    <property type="molecule type" value="Genomic_DNA"/>
</dbReference>
<dbReference type="EMBL" id="CP002688">
    <property type="protein sequence ID" value="AED94531.1"/>
    <property type="molecule type" value="Genomic_DNA"/>
</dbReference>
<dbReference type="EMBL" id="BT010719">
    <property type="protein sequence ID" value="AAR20776.1"/>
    <property type="molecule type" value="mRNA"/>
</dbReference>
<dbReference type="EMBL" id="BT011792">
    <property type="protein sequence ID" value="AAS68116.1"/>
    <property type="molecule type" value="mRNA"/>
</dbReference>
<dbReference type="RefSeq" id="NP_198846.1">
    <property type="nucleotide sequence ID" value="NM_123394.4"/>
</dbReference>
<dbReference type="SMR" id="Q9FNE8"/>
<dbReference type="BioGRID" id="19279">
    <property type="interactions" value="2"/>
</dbReference>
<dbReference type="FunCoup" id="Q9FNE8">
    <property type="interactions" value="72"/>
</dbReference>
<dbReference type="IntAct" id="Q9FNE8">
    <property type="interactions" value="2"/>
</dbReference>
<dbReference type="STRING" id="3702.Q9FNE8"/>
<dbReference type="GlyGen" id="Q9FNE8">
    <property type="glycosylation" value="1 site"/>
</dbReference>
<dbReference type="iPTMnet" id="Q9FNE8"/>
<dbReference type="PaxDb" id="3702-AT5G40300.1"/>
<dbReference type="ProteomicsDB" id="222712"/>
<dbReference type="EnsemblPlants" id="AT5G40300.1">
    <property type="protein sequence ID" value="AT5G40300.1"/>
    <property type="gene ID" value="AT5G40300"/>
</dbReference>
<dbReference type="GeneID" id="834028"/>
<dbReference type="Gramene" id="AT5G40300.1">
    <property type="protein sequence ID" value="AT5G40300.1"/>
    <property type="gene ID" value="AT5G40300"/>
</dbReference>
<dbReference type="KEGG" id="ath:AT5G40300"/>
<dbReference type="Araport" id="AT5G40300"/>
<dbReference type="TAIR" id="AT5G40300">
    <property type="gene designation" value="CASPL4A1"/>
</dbReference>
<dbReference type="eggNOG" id="ENOG502QW75">
    <property type="taxonomic scope" value="Eukaryota"/>
</dbReference>
<dbReference type="HOGENOM" id="CLU_048961_2_0_1"/>
<dbReference type="InParanoid" id="Q9FNE8"/>
<dbReference type="OMA" id="YFTFALD"/>
<dbReference type="PhylomeDB" id="Q9FNE8"/>
<dbReference type="PRO" id="PR:Q9FNE8"/>
<dbReference type="Proteomes" id="UP000006548">
    <property type="component" value="Chromosome 5"/>
</dbReference>
<dbReference type="ExpressionAtlas" id="Q9FNE8">
    <property type="expression patterns" value="baseline and differential"/>
</dbReference>
<dbReference type="GO" id="GO:0005886">
    <property type="term" value="C:plasma membrane"/>
    <property type="evidence" value="ECO:0007669"/>
    <property type="project" value="UniProtKB-SubCell"/>
</dbReference>
<dbReference type="InterPro" id="IPR006702">
    <property type="entry name" value="CASP_dom"/>
</dbReference>
<dbReference type="PANTHER" id="PTHR33573:SF38">
    <property type="entry name" value="CASP-LIKE PROTEIN 4A1"/>
    <property type="match status" value="1"/>
</dbReference>
<dbReference type="PANTHER" id="PTHR33573">
    <property type="entry name" value="CASP-LIKE PROTEIN 4A4"/>
    <property type="match status" value="1"/>
</dbReference>
<dbReference type="Pfam" id="PF04535">
    <property type="entry name" value="CASP_dom"/>
    <property type="match status" value="1"/>
</dbReference>
<organism>
    <name type="scientific">Arabidopsis thaliana</name>
    <name type="common">Mouse-ear cress</name>
    <dbReference type="NCBI Taxonomy" id="3702"/>
    <lineage>
        <taxon>Eukaryota</taxon>
        <taxon>Viridiplantae</taxon>
        <taxon>Streptophyta</taxon>
        <taxon>Embryophyta</taxon>
        <taxon>Tracheophyta</taxon>
        <taxon>Spermatophyta</taxon>
        <taxon>Magnoliopsida</taxon>
        <taxon>eudicotyledons</taxon>
        <taxon>Gunneridae</taxon>
        <taxon>Pentapetalae</taxon>
        <taxon>rosids</taxon>
        <taxon>malvids</taxon>
        <taxon>Brassicales</taxon>
        <taxon>Brassicaceae</taxon>
        <taxon>Camelineae</taxon>
        <taxon>Arabidopsis</taxon>
    </lineage>
</organism>
<sequence length="270" mass="30299">MEELEKTQKFQKKKKQQQEKQDQSSPINFEMSSRSSLHSLPQTTIESPPDSPTLSSIPDSHGSSPHTIIPTPSVAKTETPFRVTNGEEEKKVSESRRQLRPSFSSSSSTPRESKWASLIRKALLGFRVIAFVSCLVSFSVMVSDRDKGWAHDSFYNYKEFRFCLAANVIGFVYSGFMICDLVYLLSTSIRRSRHNLRHFLEFGLDQMLAYLLASASTSASIRVDDWQSNWGADKFPDLARASVALSYVSFVAFAFCSLASGYALCALRSI</sequence>
<keyword id="KW-1003">Cell membrane</keyword>
<keyword id="KW-0472">Membrane</keyword>
<keyword id="KW-1185">Reference proteome</keyword>
<keyword id="KW-0812">Transmembrane</keyword>
<keyword id="KW-1133">Transmembrane helix</keyword>
<feature type="chain" id="PRO_0000308686" description="CASP-like protein 4A1">
    <location>
        <begin position="1"/>
        <end position="270"/>
    </location>
</feature>
<feature type="topological domain" description="Cytoplasmic" evidence="2">
    <location>
        <begin position="1"/>
        <end position="121"/>
    </location>
</feature>
<feature type="transmembrane region" description="Helical" evidence="2">
    <location>
        <begin position="122"/>
        <end position="142"/>
    </location>
</feature>
<feature type="topological domain" description="Extracellular" evidence="2">
    <location>
        <begin position="143"/>
        <end position="161"/>
    </location>
</feature>
<feature type="transmembrane region" description="Helical" evidence="2">
    <location>
        <begin position="162"/>
        <end position="182"/>
    </location>
</feature>
<feature type="topological domain" description="Cytoplasmic" evidence="2">
    <location>
        <begin position="183"/>
        <end position="198"/>
    </location>
</feature>
<feature type="transmembrane region" description="Helical" evidence="2">
    <location>
        <begin position="199"/>
        <end position="221"/>
    </location>
</feature>
<feature type="topological domain" description="Extracellular" evidence="2">
    <location>
        <begin position="222"/>
        <end position="246"/>
    </location>
</feature>
<feature type="transmembrane region" description="Helical" evidence="2">
    <location>
        <begin position="247"/>
        <end position="267"/>
    </location>
</feature>
<feature type="topological domain" description="Cytoplasmic" evidence="2">
    <location>
        <begin position="268"/>
        <end position="270"/>
    </location>
</feature>
<feature type="region of interest" description="Disordered" evidence="3">
    <location>
        <begin position="1"/>
        <end position="110"/>
    </location>
</feature>
<feature type="compositionally biased region" description="Polar residues" evidence="3">
    <location>
        <begin position="24"/>
        <end position="66"/>
    </location>
</feature>
<feature type="compositionally biased region" description="Basic and acidic residues" evidence="3">
    <location>
        <begin position="85"/>
        <end position="97"/>
    </location>
</feature>
<feature type="compositionally biased region" description="Low complexity" evidence="3">
    <location>
        <begin position="100"/>
        <end position="110"/>
    </location>
</feature>
<name>CSPLV_ARATH</name>
<protein>
    <recommendedName>
        <fullName>CASP-like protein 4A1</fullName>
        <shortName>AtCASPL4A1</shortName>
    </recommendedName>
</protein>